<accession>A6TZA3</accession>
<evidence type="ECO:0000250" key="1"/>
<evidence type="ECO:0000255" key="2"/>
<evidence type="ECO:0000305" key="3"/>
<reference key="1">
    <citation type="submission" date="2007-06" db="EMBL/GenBank/DDBJ databases">
        <title>Complete sequence of chromosome of Staphylococcus aureus subsp. aureus JH1.</title>
        <authorList>
            <consortium name="US DOE Joint Genome Institute"/>
            <person name="Copeland A."/>
            <person name="Lucas S."/>
            <person name="Lapidus A."/>
            <person name="Barry K."/>
            <person name="Detter J.C."/>
            <person name="Glavina del Rio T."/>
            <person name="Hammon N."/>
            <person name="Israni S."/>
            <person name="Dalin E."/>
            <person name="Tice H."/>
            <person name="Pitluck S."/>
            <person name="Chain P."/>
            <person name="Malfatti S."/>
            <person name="Shin M."/>
            <person name="Vergez L."/>
            <person name="Schmutz J."/>
            <person name="Larimer F."/>
            <person name="Land M."/>
            <person name="Hauser L."/>
            <person name="Kyrpides N."/>
            <person name="Ivanova N."/>
            <person name="Tomasz A."/>
            <person name="Richardson P."/>
        </authorList>
    </citation>
    <scope>NUCLEOTIDE SEQUENCE [LARGE SCALE GENOMIC DNA]</scope>
    <source>
        <strain>JH1</strain>
    </source>
</reference>
<dbReference type="EMBL" id="CP000736">
    <property type="protein sequence ID" value="ABR51521.1"/>
    <property type="molecule type" value="Genomic_DNA"/>
</dbReference>
<dbReference type="SMR" id="A6TZA3"/>
<dbReference type="KEGG" id="sah:SaurJH1_0664"/>
<dbReference type="HOGENOM" id="CLU_086615_3_2_9"/>
<dbReference type="GO" id="GO:0005886">
    <property type="term" value="C:plasma membrane"/>
    <property type="evidence" value="ECO:0007669"/>
    <property type="project" value="UniProtKB-SubCell"/>
</dbReference>
<dbReference type="GO" id="GO:0015297">
    <property type="term" value="F:antiporter activity"/>
    <property type="evidence" value="ECO:0007669"/>
    <property type="project" value="UniProtKB-KW"/>
</dbReference>
<dbReference type="GO" id="GO:0008324">
    <property type="term" value="F:monoatomic cation transmembrane transporter activity"/>
    <property type="evidence" value="ECO:0007669"/>
    <property type="project" value="InterPro"/>
</dbReference>
<dbReference type="InterPro" id="IPR002758">
    <property type="entry name" value="Cation_antiport_E"/>
</dbReference>
<dbReference type="NCBIfam" id="NF006517">
    <property type="entry name" value="PRK08965.1-1"/>
    <property type="match status" value="1"/>
</dbReference>
<dbReference type="PANTHER" id="PTHR34584">
    <property type="entry name" value="NA(+)/H(+) ANTIPORTER SUBUNIT E1"/>
    <property type="match status" value="1"/>
</dbReference>
<dbReference type="PANTHER" id="PTHR34584:SF1">
    <property type="entry name" value="NA(+)_H(+) ANTIPORTER SUBUNIT E1"/>
    <property type="match status" value="1"/>
</dbReference>
<dbReference type="Pfam" id="PF01899">
    <property type="entry name" value="MNHE"/>
    <property type="match status" value="1"/>
</dbReference>
<dbReference type="PIRSF" id="PIRSF019239">
    <property type="entry name" value="MrpE"/>
    <property type="match status" value="1"/>
</dbReference>
<comment type="subunit">
    <text evidence="1">May form a heterooligomeric complex that consists of seven subunits: mnhA2, mnhB2, mnhC2, mnhD2, mnhE2, mnhF2 and mnhG2.</text>
</comment>
<comment type="subcellular location">
    <subcellularLocation>
        <location evidence="3">Cell membrane</location>
        <topology evidence="3">Multi-pass membrane protein</topology>
    </subcellularLocation>
</comment>
<comment type="similarity">
    <text evidence="3">Belongs to the CPA3 antiporters (TC 2.A.63) subunit E family.</text>
</comment>
<protein>
    <recommendedName>
        <fullName>Putative antiporter subunit mnhE2</fullName>
    </recommendedName>
    <alternativeName>
        <fullName>Mrp complex subunit E2</fullName>
    </alternativeName>
    <alternativeName>
        <fullName>Putative NADH-ubiquinone oxidoreductase subunit mnhE2</fullName>
    </alternativeName>
</protein>
<proteinExistence type="inferred from homology"/>
<organism>
    <name type="scientific">Staphylococcus aureus (strain JH1)</name>
    <dbReference type="NCBI Taxonomy" id="359787"/>
    <lineage>
        <taxon>Bacteria</taxon>
        <taxon>Bacillati</taxon>
        <taxon>Bacillota</taxon>
        <taxon>Bacilli</taxon>
        <taxon>Bacillales</taxon>
        <taxon>Staphylococcaceae</taxon>
        <taxon>Staphylococcus</taxon>
    </lineage>
</organism>
<feature type="chain" id="PRO_0000372212" description="Putative antiporter subunit mnhE2">
    <location>
        <begin position="1"/>
        <end position="160"/>
    </location>
</feature>
<feature type="transmembrane region" description="Helical" evidence="2">
    <location>
        <begin position="22"/>
        <end position="42"/>
    </location>
</feature>
<feature type="transmembrane region" description="Helical" evidence="2">
    <location>
        <begin position="55"/>
        <end position="75"/>
    </location>
</feature>
<feature type="transmembrane region" description="Helical" evidence="2">
    <location>
        <begin position="100"/>
        <end position="120"/>
    </location>
</feature>
<sequence>MNQIVLNIIIAFLWVLFQDEDHFKFSTFFSGYLIGLIVIYILHRFFSDDFYVRKIWVAIKFLGVYLYQLITSSISTINYILFKTKDMNPGLLSYETRLTSDWAITFLTILIIITPGSTVIRISQDSKKFFIHSIDVSEKEKDSLLRSIKHYEDLILEVSR</sequence>
<keyword id="KW-0050">Antiport</keyword>
<keyword id="KW-1003">Cell membrane</keyword>
<keyword id="KW-0406">Ion transport</keyword>
<keyword id="KW-0472">Membrane</keyword>
<keyword id="KW-0812">Transmembrane</keyword>
<keyword id="KW-1133">Transmembrane helix</keyword>
<keyword id="KW-0813">Transport</keyword>
<name>MNHE2_STAA2</name>
<gene>
    <name type="primary">mnhE2</name>
    <name type="synonym">mrpE2</name>
    <name type="ordered locus">SaurJH1_0664</name>
</gene>